<feature type="chain" id="PRO_0000183365" description="Cytochrome c oxidase subunit 1">
    <location>
        <begin position="1"/>
        <end position="517"/>
    </location>
</feature>
<feature type="topological domain" description="Mitochondrial matrix" evidence="2">
    <location>
        <begin position="1"/>
        <end position="11"/>
    </location>
</feature>
<feature type="transmembrane region" description="Helical; Name=I" evidence="2">
    <location>
        <begin position="12"/>
        <end position="40"/>
    </location>
</feature>
<feature type="topological domain" description="Mitochondrial intermembrane" evidence="2">
    <location>
        <begin position="41"/>
        <end position="50"/>
    </location>
</feature>
<feature type="transmembrane region" description="Helical; Name=II" evidence="2">
    <location>
        <begin position="51"/>
        <end position="86"/>
    </location>
</feature>
<feature type="topological domain" description="Mitochondrial matrix" evidence="2">
    <location>
        <begin position="87"/>
        <end position="94"/>
    </location>
</feature>
<feature type="transmembrane region" description="Helical; Name=III" evidence="2">
    <location>
        <begin position="95"/>
        <end position="117"/>
    </location>
</feature>
<feature type="topological domain" description="Mitochondrial intermembrane" evidence="2">
    <location>
        <begin position="118"/>
        <end position="140"/>
    </location>
</feature>
<feature type="transmembrane region" description="Helical; Name=IV" evidence="2">
    <location>
        <begin position="141"/>
        <end position="170"/>
    </location>
</feature>
<feature type="topological domain" description="Mitochondrial matrix" evidence="2">
    <location>
        <begin position="171"/>
        <end position="182"/>
    </location>
</feature>
<feature type="transmembrane region" description="Helical; Name=V" evidence="2">
    <location>
        <begin position="183"/>
        <end position="212"/>
    </location>
</feature>
<feature type="topological domain" description="Mitochondrial intermembrane" evidence="2">
    <location>
        <begin position="213"/>
        <end position="227"/>
    </location>
</feature>
<feature type="transmembrane region" description="Helical; Name=VI" evidence="2">
    <location>
        <begin position="228"/>
        <end position="261"/>
    </location>
</feature>
<feature type="topological domain" description="Mitochondrial matrix" evidence="2">
    <location>
        <begin position="262"/>
        <end position="269"/>
    </location>
</feature>
<feature type="transmembrane region" description="Helical; Name=VII" evidence="2">
    <location>
        <begin position="270"/>
        <end position="286"/>
    </location>
</feature>
<feature type="topological domain" description="Mitochondrial intermembrane" evidence="2">
    <location>
        <begin position="287"/>
        <end position="298"/>
    </location>
</feature>
<feature type="transmembrane region" description="Helical; Name=VIII" evidence="2">
    <location>
        <begin position="299"/>
        <end position="327"/>
    </location>
</feature>
<feature type="topological domain" description="Mitochondrial matrix" evidence="2">
    <location>
        <begin position="328"/>
        <end position="335"/>
    </location>
</feature>
<feature type="transmembrane region" description="Helical; Name=IX" evidence="2">
    <location>
        <begin position="336"/>
        <end position="357"/>
    </location>
</feature>
<feature type="topological domain" description="Mitochondrial intermembrane" evidence="2">
    <location>
        <begin position="358"/>
        <end position="370"/>
    </location>
</feature>
<feature type="transmembrane region" description="Helical; Name=X" evidence="2">
    <location>
        <begin position="371"/>
        <end position="400"/>
    </location>
</feature>
<feature type="topological domain" description="Mitochondrial matrix" evidence="2">
    <location>
        <begin position="401"/>
        <end position="406"/>
    </location>
</feature>
<feature type="transmembrane region" description="Helical; Name=XI" evidence="2">
    <location>
        <begin position="407"/>
        <end position="433"/>
    </location>
</feature>
<feature type="topological domain" description="Mitochondrial intermembrane" evidence="2">
    <location>
        <begin position="434"/>
        <end position="446"/>
    </location>
</feature>
<feature type="transmembrane region" description="Helical; Name=XII" evidence="2">
    <location>
        <begin position="447"/>
        <end position="478"/>
    </location>
</feature>
<feature type="topological domain" description="Mitochondrial matrix" evidence="2">
    <location>
        <begin position="479"/>
        <end position="517"/>
    </location>
</feature>
<feature type="binding site" evidence="2">
    <location>
        <position position="40"/>
    </location>
    <ligand>
        <name>Na(+)</name>
        <dbReference type="ChEBI" id="CHEBI:29101"/>
    </ligand>
</feature>
<feature type="binding site" evidence="2">
    <location>
        <position position="45"/>
    </location>
    <ligand>
        <name>Na(+)</name>
        <dbReference type="ChEBI" id="CHEBI:29101"/>
    </ligand>
</feature>
<feature type="binding site" description="axial binding residue" evidence="2">
    <location>
        <position position="61"/>
    </location>
    <ligand>
        <name>Fe(II)-heme a</name>
        <dbReference type="ChEBI" id="CHEBI:61715"/>
        <note>low-spin</note>
    </ligand>
    <ligandPart>
        <name>Fe</name>
        <dbReference type="ChEBI" id="CHEBI:18248"/>
    </ligandPart>
</feature>
<feature type="binding site" evidence="2">
    <location>
        <position position="240"/>
    </location>
    <ligand>
        <name>Cu cation</name>
        <dbReference type="ChEBI" id="CHEBI:23378"/>
        <label>B</label>
    </ligand>
</feature>
<feature type="binding site" evidence="2">
    <location>
        <position position="244"/>
    </location>
    <ligand>
        <name>O2</name>
        <dbReference type="ChEBI" id="CHEBI:15379"/>
    </ligand>
</feature>
<feature type="binding site" evidence="2">
    <location>
        <position position="290"/>
    </location>
    <ligand>
        <name>Cu cation</name>
        <dbReference type="ChEBI" id="CHEBI:23378"/>
        <label>B</label>
    </ligand>
</feature>
<feature type="binding site" evidence="2">
    <location>
        <position position="291"/>
    </location>
    <ligand>
        <name>Cu cation</name>
        <dbReference type="ChEBI" id="CHEBI:23378"/>
        <label>B</label>
    </ligand>
</feature>
<feature type="binding site" evidence="2">
    <location>
        <position position="368"/>
    </location>
    <ligand>
        <name>Mg(2+)</name>
        <dbReference type="ChEBI" id="CHEBI:18420"/>
        <note>ligand shared with MT-CO2</note>
    </ligand>
</feature>
<feature type="binding site" evidence="2">
    <location>
        <position position="369"/>
    </location>
    <ligand>
        <name>Mg(2+)</name>
        <dbReference type="ChEBI" id="CHEBI:18420"/>
        <note>ligand shared with MT-CO2</note>
    </ligand>
</feature>
<feature type="binding site" description="axial binding residue" evidence="2">
    <location>
        <position position="376"/>
    </location>
    <ligand>
        <name>heme a3</name>
        <dbReference type="ChEBI" id="CHEBI:83282"/>
        <note>high-spin</note>
    </ligand>
    <ligandPart>
        <name>Fe</name>
        <dbReference type="ChEBI" id="CHEBI:18248"/>
    </ligandPart>
</feature>
<feature type="binding site" description="axial binding residue" evidence="2">
    <location>
        <position position="378"/>
    </location>
    <ligand>
        <name>Fe(II)-heme a</name>
        <dbReference type="ChEBI" id="CHEBI:61715"/>
        <note>low-spin</note>
    </ligand>
    <ligandPart>
        <name>Fe</name>
        <dbReference type="ChEBI" id="CHEBI:18248"/>
    </ligandPart>
</feature>
<feature type="binding site" evidence="2">
    <location>
        <position position="441"/>
    </location>
    <ligand>
        <name>Na(+)</name>
        <dbReference type="ChEBI" id="CHEBI:29101"/>
    </ligand>
</feature>
<feature type="cross-link" description="1'-histidyl-3'-tyrosine (His-Tyr)" evidence="2">
    <location>
        <begin position="240"/>
        <end position="244"/>
    </location>
</feature>
<organism>
    <name type="scientific">Myxine glutinosa</name>
    <name type="common">Atlantic hagfish</name>
    <dbReference type="NCBI Taxonomy" id="7769"/>
    <lineage>
        <taxon>Eukaryota</taxon>
        <taxon>Metazoa</taxon>
        <taxon>Chordata</taxon>
        <taxon>Craniata</taxon>
        <taxon>Vertebrata</taxon>
        <taxon>Cyclostomata</taxon>
        <taxon>Myxini</taxon>
        <taxon>Myxiniformes</taxon>
        <taxon>Myxinidae</taxon>
        <taxon>Myxininae</taxon>
        <taxon>Myxine</taxon>
    </lineage>
</organism>
<sequence length="517" mass="57947">MYLSRWFFSTNHKDIGTLYLIFGAWAGMIGTALSVIIRTELSQPGSLINNDQLYNTIITAHAFVMIFFMVMPIMIGGFGNWLVPMMIGAPDMAFPRMNNMSFWLLPPSLMLLLSSSLVSSGAGTGWTVYPPLSNHISHMGPSVDLAIFSLHLAGVSSILGAINFITTIINMKTRSMEMYHIPLFVWSILITAILLLLSLPVLAAAITMLLTDRNLNTTFFDPSGGGDPILYQHLFWFFGHPEVYILILPGFGIISHVVTFYSGKKEPFGYMGMAWAMMAIGFLGFIVWAHHMFTVGMDVDTRAYFTSATMIIAIPTGVKVFSWLATIHGGDIKWEPPMLWALGFIFLFTVGGLTGIVLSNSSLDVVLHDTYYVVAHFHYVLSMGAVFAIMAGLMHWFPLFSGYSINKTWAKIHFWIMFTGVNLTFFPQHFLGLAGMPRRYSDYPDAYSTWNVLSSIGSMVSFVGTIILMFIIWEAFSSKREPNPLSLPLYNPEWIYGTPPTFHTFENPSYLKIIKKE</sequence>
<keyword id="KW-0106">Calcium</keyword>
<keyword id="KW-0186">Copper</keyword>
<keyword id="KW-0249">Electron transport</keyword>
<keyword id="KW-0349">Heme</keyword>
<keyword id="KW-0408">Iron</keyword>
<keyword id="KW-0460">Magnesium</keyword>
<keyword id="KW-0472">Membrane</keyword>
<keyword id="KW-0479">Metal-binding</keyword>
<keyword id="KW-0496">Mitochondrion</keyword>
<keyword id="KW-0999">Mitochondrion inner membrane</keyword>
<keyword id="KW-0679">Respiratory chain</keyword>
<keyword id="KW-0915">Sodium</keyword>
<keyword id="KW-1278">Translocase</keyword>
<keyword id="KW-0812">Transmembrane</keyword>
<keyword id="KW-1133">Transmembrane helix</keyword>
<keyword id="KW-0813">Transport</keyword>
<comment type="function">
    <text evidence="3">Component of the cytochrome c oxidase, the last enzyme in the mitochondrial electron transport chain which drives oxidative phosphorylation. The respiratory chain contains 3 multisubunit complexes succinate dehydrogenase (complex II, CII), ubiquinol-cytochrome c oxidoreductase (cytochrome b-c1 complex, complex III, CIII) and cytochrome c oxidase (complex IV, CIV), that cooperate to transfer electrons derived from NADH and succinate to molecular oxygen, creating an electrochemical gradient over the inner membrane that drives transmembrane transport and the ATP synthase. Cytochrome c oxidase is the component of the respiratory chain that catalyzes the reduction of oxygen to water. Electrons originating from reduced cytochrome c in the intermembrane space (IMS) are transferred via the dinuclear copper A center (CU(A)) of subunit 2 and heme A of subunit 1 to the active site in subunit 1, a binuclear center (BNC) formed by heme A3 and copper B (CU(B)). The BNC reduces molecular oxygen to 2 water molecules using 4 electrons from cytochrome c in the IMS and 4 protons from the mitochondrial matrix.</text>
</comment>
<comment type="catalytic activity">
    <reaction evidence="3">
        <text>4 Fe(II)-[cytochrome c] + O2 + 8 H(+)(in) = 4 Fe(III)-[cytochrome c] + 2 H2O + 4 H(+)(out)</text>
        <dbReference type="Rhea" id="RHEA:11436"/>
        <dbReference type="Rhea" id="RHEA-COMP:10350"/>
        <dbReference type="Rhea" id="RHEA-COMP:14399"/>
        <dbReference type="ChEBI" id="CHEBI:15377"/>
        <dbReference type="ChEBI" id="CHEBI:15378"/>
        <dbReference type="ChEBI" id="CHEBI:15379"/>
        <dbReference type="ChEBI" id="CHEBI:29033"/>
        <dbReference type="ChEBI" id="CHEBI:29034"/>
        <dbReference type="EC" id="7.1.1.9"/>
    </reaction>
    <physiologicalReaction direction="left-to-right" evidence="3">
        <dbReference type="Rhea" id="RHEA:11437"/>
    </physiologicalReaction>
</comment>
<comment type="cofactor">
    <cofactor evidence="2">
        <name>heme</name>
        <dbReference type="ChEBI" id="CHEBI:30413"/>
    </cofactor>
    <text evidence="2">Binds 2 heme A groups non-covalently per subunit.</text>
</comment>
<comment type="cofactor">
    <cofactor evidence="2">
        <name>Cu cation</name>
        <dbReference type="ChEBI" id="CHEBI:23378"/>
    </cofactor>
    <text evidence="2">Binds a copper B center.</text>
</comment>
<comment type="pathway">
    <text evidence="3">Energy metabolism; oxidative phosphorylation.</text>
</comment>
<comment type="subunit">
    <text evidence="1 2">Component of the cytochrome c oxidase (complex IV, CIV), a multisubunit enzyme composed of 14 subunits. The complex is composed of a catalytic core of 3 subunits MT-CO1, MT-CO2 and MT-CO3, encoded in the mitochondrial DNA, and 11 supernumerary subunits COX4I, COX5A, COX5B, COX6A, COX6B, COX6C, COX7A, COX7B, COX7C, COX8 and NDUFA4, which are encoded in the nuclear genome. The complex exists as a monomer or a dimer and forms supercomplexes (SCs) in the inner mitochondrial membrane with NADH-ubiquinone oxidoreductase (complex I, CI) and ubiquinol-cytochrome c oxidoreductase (cytochrome b-c1 complex, complex III, CIII), resulting in different assemblies (supercomplex SCI(1)III(2)IV(1) and megacomplex MCI(2)III(2)IV(2)) (By similarity). As a newly synthesized protein, rapidly incorporates into a multi-subunit assembly intermediate in the inner membrane, called MITRAC (mitochondrial translation regulation assembly intermediate of cytochrome c oxidase) complex, whose core components are COA3/MITRAC12 and COX14. Within the MITRAC complex, interacts with COA3 and with SMIM20/MITRAC7; the interaction with SMIM20 stabilizes the newly synthesized MT-CO1 and prevents its premature turnover. Interacts with TMEM177 in a COX20-dependent manner (By similarity).</text>
</comment>
<comment type="subcellular location">
    <subcellularLocation>
        <location evidence="2">Mitochondrion inner membrane</location>
        <topology evidence="2">Multi-pass membrane protein</topology>
    </subcellularLocation>
</comment>
<comment type="similarity">
    <text evidence="4">Belongs to the heme-copper respiratory oxidase family.</text>
</comment>
<proteinExistence type="inferred from homology"/>
<protein>
    <recommendedName>
        <fullName>Cytochrome c oxidase subunit 1</fullName>
        <ecNumber>7.1.1.9</ecNumber>
    </recommendedName>
    <alternativeName>
        <fullName>Cytochrome c oxidase polypeptide I</fullName>
    </alternativeName>
</protein>
<reference key="1">
    <citation type="journal article" date="1998" name="J. Mol. Evol.">
        <title>The mitochondrial DNA molecule of the hagfish (Myxine glutinosa) and vertebrate phylogeny.</title>
        <authorList>
            <person name="Rasmussen A.S."/>
            <person name="Janke A."/>
            <person name="Arnason U."/>
        </authorList>
    </citation>
    <scope>NUCLEOTIDE SEQUENCE [GENOMIC DNA]</scope>
</reference>
<reference key="2">
    <citation type="journal article" date="2001" name="J. Mol. Evol.">
        <title>The complete mitochondrial genome of the hagfish Myxine glutinosa: unique features of the control region.</title>
        <authorList>
            <person name="Delarbre C."/>
            <person name="Rasmussen A.S."/>
            <person name="Arnason U."/>
            <person name="Gachelin G."/>
        </authorList>
    </citation>
    <scope>NUCLEOTIDE SEQUENCE [GENOMIC DNA]</scope>
</reference>
<reference key="3">
    <citation type="journal article" date="1997" name="Mol. Biol. Evol.">
        <title>The main features of the craniate mitochondrial DNA between the ND1 and the COI genes were established in the common ancestor with the lancelet.</title>
        <authorList>
            <person name="Delarbre C."/>
            <person name="Barriel V."/>
            <person name="Tillier S."/>
            <person name="Janvier P."/>
            <person name="Gachelin G."/>
        </authorList>
    </citation>
    <scope>NUCLEOTIDE SEQUENCE [GENOMIC DNA] OF 1-8</scope>
</reference>
<dbReference type="EC" id="7.1.1.9"/>
<dbReference type="EMBL" id="Y15182">
    <property type="protein sequence ID" value="CAA75481.1"/>
    <property type="molecule type" value="Genomic_DNA"/>
</dbReference>
<dbReference type="EMBL" id="AJ404477">
    <property type="protein sequence ID" value="CAC20651.1"/>
    <property type="molecule type" value="Genomic_DNA"/>
</dbReference>
<dbReference type="EMBL" id="Y09527">
    <property type="protein sequence ID" value="CAA70718.1"/>
    <property type="molecule type" value="Genomic_DNA"/>
</dbReference>
<dbReference type="PIR" id="T13818">
    <property type="entry name" value="T13818"/>
</dbReference>
<dbReference type="SMR" id="O21079"/>
<dbReference type="CTD" id="4512"/>
<dbReference type="UniPathway" id="UPA00705"/>
<dbReference type="GO" id="GO:0005743">
    <property type="term" value="C:mitochondrial inner membrane"/>
    <property type="evidence" value="ECO:0007669"/>
    <property type="project" value="UniProtKB-SubCell"/>
</dbReference>
<dbReference type="GO" id="GO:0045277">
    <property type="term" value="C:respiratory chain complex IV"/>
    <property type="evidence" value="ECO:0000250"/>
    <property type="project" value="UniProtKB"/>
</dbReference>
<dbReference type="GO" id="GO:0004129">
    <property type="term" value="F:cytochrome-c oxidase activity"/>
    <property type="evidence" value="ECO:0007669"/>
    <property type="project" value="UniProtKB-EC"/>
</dbReference>
<dbReference type="GO" id="GO:0020037">
    <property type="term" value="F:heme binding"/>
    <property type="evidence" value="ECO:0007669"/>
    <property type="project" value="InterPro"/>
</dbReference>
<dbReference type="GO" id="GO:0046872">
    <property type="term" value="F:metal ion binding"/>
    <property type="evidence" value="ECO:0007669"/>
    <property type="project" value="UniProtKB-KW"/>
</dbReference>
<dbReference type="GO" id="GO:0015990">
    <property type="term" value="P:electron transport coupled proton transport"/>
    <property type="evidence" value="ECO:0007669"/>
    <property type="project" value="TreeGrafter"/>
</dbReference>
<dbReference type="GO" id="GO:0006123">
    <property type="term" value="P:mitochondrial electron transport, cytochrome c to oxygen"/>
    <property type="evidence" value="ECO:0007669"/>
    <property type="project" value="TreeGrafter"/>
</dbReference>
<dbReference type="CDD" id="cd01663">
    <property type="entry name" value="Cyt_c_Oxidase_I"/>
    <property type="match status" value="1"/>
</dbReference>
<dbReference type="FunFam" id="1.20.210.10:FF:000001">
    <property type="entry name" value="Cytochrome c oxidase subunit 1"/>
    <property type="match status" value="1"/>
</dbReference>
<dbReference type="Gene3D" id="1.20.210.10">
    <property type="entry name" value="Cytochrome c oxidase-like, subunit I domain"/>
    <property type="match status" value="1"/>
</dbReference>
<dbReference type="InterPro" id="IPR023616">
    <property type="entry name" value="Cyt_c_oxase-like_su1_dom"/>
</dbReference>
<dbReference type="InterPro" id="IPR036927">
    <property type="entry name" value="Cyt_c_oxase-like_su1_sf"/>
</dbReference>
<dbReference type="InterPro" id="IPR000883">
    <property type="entry name" value="Cyt_C_Oxase_1"/>
</dbReference>
<dbReference type="InterPro" id="IPR023615">
    <property type="entry name" value="Cyt_c_Oxase_su1_BS"/>
</dbReference>
<dbReference type="InterPro" id="IPR033944">
    <property type="entry name" value="Cyt_c_oxase_su1_dom"/>
</dbReference>
<dbReference type="PANTHER" id="PTHR10422">
    <property type="entry name" value="CYTOCHROME C OXIDASE SUBUNIT 1"/>
    <property type="match status" value="1"/>
</dbReference>
<dbReference type="PANTHER" id="PTHR10422:SF18">
    <property type="entry name" value="CYTOCHROME C OXIDASE SUBUNIT 1"/>
    <property type="match status" value="1"/>
</dbReference>
<dbReference type="Pfam" id="PF00115">
    <property type="entry name" value="COX1"/>
    <property type="match status" value="1"/>
</dbReference>
<dbReference type="PRINTS" id="PR01165">
    <property type="entry name" value="CYCOXIDASEI"/>
</dbReference>
<dbReference type="SUPFAM" id="SSF81442">
    <property type="entry name" value="Cytochrome c oxidase subunit I-like"/>
    <property type="match status" value="1"/>
</dbReference>
<dbReference type="PROSITE" id="PS50855">
    <property type="entry name" value="COX1"/>
    <property type="match status" value="1"/>
</dbReference>
<dbReference type="PROSITE" id="PS00077">
    <property type="entry name" value="COX1_CUB"/>
    <property type="match status" value="1"/>
</dbReference>
<gene>
    <name type="primary">MT-CO1</name>
    <name type="synonym">COI</name>
    <name type="synonym">COXI</name>
    <name type="synonym">MTCO1</name>
</gene>
<geneLocation type="mitochondrion"/>
<accession>O21079</accession>
<evidence type="ECO:0000250" key="1">
    <source>
        <dbReference type="UniProtKB" id="P00395"/>
    </source>
</evidence>
<evidence type="ECO:0000250" key="2">
    <source>
        <dbReference type="UniProtKB" id="P00396"/>
    </source>
</evidence>
<evidence type="ECO:0000250" key="3">
    <source>
        <dbReference type="UniProtKB" id="P00401"/>
    </source>
</evidence>
<evidence type="ECO:0000305" key="4"/>
<name>COX1_MYXGL</name>